<protein>
    <recommendedName>
        <fullName evidence="1">ATP-dependent helicase/nuclease subunit A</fullName>
        <ecNumber evidence="1">3.1.-.-</ecNumber>
        <ecNumber evidence="1">5.6.2.4</ecNumber>
    </recommendedName>
    <alternativeName>
        <fullName evidence="1">ATP-dependent helicase/nuclease AddA</fullName>
    </alternativeName>
    <alternativeName>
        <fullName evidence="1">DNA 3'-5' helicase AddA</fullName>
    </alternativeName>
</protein>
<gene>
    <name evidence="1" type="primary">addA</name>
    <name type="ordered locus">Sez_0829</name>
</gene>
<sequence length="1214" mass="138506">MRIDEGFLTPEAIARLQQEEALSDKRHKRTAQQIEAIYSSGQNILVSASAGSGKTFVMVERILDKILRGISVDRLFISTFTVKAATELIERIEKKLHTAIAETQDYQLKAYLNDQLQALSQADIGTMDAFAQKLVHQHGYVLGISPHFRIIQDKAEQDILKREVFRQVFEDYMSQTDNKAFIQLVQNFSGRRKDSSAFREIVDSIYAFSQSTANPSSWLAEVFLRGAKTYTSFADIPDQVVDALLACMQDTADQLRDLTDMEGYAQTTKAGKLTAKYTKHLKMIDNLYEWASHFDSLYGKERLGQLAQELTALLPSGADITVAGHKYPIFKSLQEQLVGFRHLETILAYQQESLPLLEVLQAFVISFSEAYLAAKMQENAFEFSDIAHFAIEILQQAPDIRQAYQGHYHEVMVDEYQDNNHMQERLLELLSNGHNRFMVGDIKQSIYRFRQADPQIFNQKFKDYQSNPEHGKLILLKENFRSQSEVLNVTNAVFSRLMDESLGEITYDDKHQLVAGSEAQKQLHPENRAQLLLYNTDQAQEGTEEASTNDGISAGEVTLVAKEIIRLYNEEKVAFEDITLLVSSRTRNDTIFQVFNQYGIPLVADGGQENYLKSVEVMVMLDTLRSINNPLNDYALVALMRSPMFSFDEDQLARISLQSSSQDQPQAFYDKLSNSLRGQGEHPGLIGQELMTKLVDFDRTLRDWRQFAKLHSLYELIWKIFNDRFYFDFVASQPKAEQAQANLYALAIRADQFEQSGYKGLSRFIGMIDKVLETQNDLADVEVERPKHAVNLMTIHKSKGLEFHYVFILNFDKRFAMADLQAPIILNRDEGIGIKYVANVKELLRDEKLASLKVTMETLPYQLNKQQLRLATLSEQMRLLYVAMTRAEKKVYLVGKASKEKIQAKTADNSSEGRLALASRERLLSFQDWLLAITATFSKEDLFIDVRFVDDSDLTAEAVGQLRSSGLLQADDLKDNRQTEDIARALDMLDKVSKLNASYQAAIELPTVRTPSQLKTLYEPLMDTDGVDIIDQPYHRPKSFELPDFSKKKAVEPSQVGSSLHELMQRIPMSDQITAGDIEQALQLVSADAEVKARLDIKKVTAFFATTELGKLLQEHHQRLYREAPFAILKKDSLSQEQYVVRGIIDGYLLFEDRIVLFDYKTDRYQQSAELKQRYQQQMDLYAEALSQSYGIARVEKYLVLMGGSQLEVVRLDE</sequence>
<comment type="function">
    <text evidence="1">The heterodimer acts as both an ATP-dependent DNA helicase and an ATP-dependent, dual-direction single-stranded exonuclease. Recognizes the chi site generating a DNA molecule suitable for the initiation of homologous recombination. The AddA nuclease domain is required for chi fragment generation; this subunit has the helicase and 3' -&gt; 5' nuclease activities.</text>
</comment>
<comment type="catalytic activity">
    <reaction evidence="1">
        <text>Couples ATP hydrolysis with the unwinding of duplex DNA by translocating in the 3'-5' direction.</text>
        <dbReference type="EC" id="5.6.2.4"/>
    </reaction>
</comment>
<comment type="catalytic activity">
    <reaction evidence="1">
        <text>ATP + H2O = ADP + phosphate + H(+)</text>
        <dbReference type="Rhea" id="RHEA:13065"/>
        <dbReference type="ChEBI" id="CHEBI:15377"/>
        <dbReference type="ChEBI" id="CHEBI:15378"/>
        <dbReference type="ChEBI" id="CHEBI:30616"/>
        <dbReference type="ChEBI" id="CHEBI:43474"/>
        <dbReference type="ChEBI" id="CHEBI:456216"/>
        <dbReference type="EC" id="5.6.2.4"/>
    </reaction>
</comment>
<comment type="cofactor">
    <cofactor evidence="1">
        <name>Mg(2+)</name>
        <dbReference type="ChEBI" id="CHEBI:18420"/>
    </cofactor>
</comment>
<comment type="subunit">
    <text evidence="1">Heterodimer of AddA and AddB/RexB.</text>
</comment>
<comment type="similarity">
    <text evidence="1">Belongs to the helicase family. AddA subfamily.</text>
</comment>
<proteinExistence type="inferred from homology"/>
<name>ADDA_STREM</name>
<reference key="1">
    <citation type="journal article" date="2008" name="PLoS ONE">
        <title>Genome sequence of a lancefield group C Streptococcus zooepidemicus strain causing epidemic nephritis: new information about an old disease.</title>
        <authorList>
            <person name="Beres S.B."/>
            <person name="Sesso R."/>
            <person name="Pinto S.W.L."/>
            <person name="Hoe N.P."/>
            <person name="Porcella S.F."/>
            <person name="Deleo F.R."/>
            <person name="Musser J.M."/>
        </authorList>
    </citation>
    <scope>NUCLEOTIDE SEQUENCE [LARGE SCALE GENOMIC DNA]</scope>
    <source>
        <strain>MGCS10565</strain>
    </source>
</reference>
<accession>B4U2H1</accession>
<feature type="chain" id="PRO_0000379330" description="ATP-dependent helicase/nuclease subunit A">
    <location>
        <begin position="1"/>
        <end position="1214"/>
    </location>
</feature>
<feature type="domain" description="UvrD-like helicase ATP-binding" evidence="1">
    <location>
        <begin position="27"/>
        <end position="483"/>
    </location>
</feature>
<feature type="domain" description="UvrD-like helicase C-terminal" evidence="1">
    <location>
        <begin position="512"/>
        <end position="800"/>
    </location>
</feature>
<feature type="binding site" evidence="1">
    <location>
        <begin position="48"/>
        <end position="55"/>
    </location>
    <ligand>
        <name>ATP</name>
        <dbReference type="ChEBI" id="CHEBI:30616"/>
    </ligand>
</feature>
<keyword id="KW-0067">ATP-binding</keyword>
<keyword id="KW-0227">DNA damage</keyword>
<keyword id="KW-0234">DNA repair</keyword>
<keyword id="KW-0238">DNA-binding</keyword>
<keyword id="KW-0269">Exonuclease</keyword>
<keyword id="KW-0347">Helicase</keyword>
<keyword id="KW-0378">Hydrolase</keyword>
<keyword id="KW-0413">Isomerase</keyword>
<keyword id="KW-0540">Nuclease</keyword>
<keyword id="KW-0547">Nucleotide-binding</keyword>
<evidence type="ECO:0000255" key="1">
    <source>
        <dbReference type="HAMAP-Rule" id="MF_01451"/>
    </source>
</evidence>
<dbReference type="EC" id="3.1.-.-" evidence="1"/>
<dbReference type="EC" id="5.6.2.4" evidence="1"/>
<dbReference type="EMBL" id="CP001129">
    <property type="protein sequence ID" value="ACG62188.1"/>
    <property type="molecule type" value="Genomic_DNA"/>
</dbReference>
<dbReference type="RefSeq" id="WP_012515462.1">
    <property type="nucleotide sequence ID" value="NC_011134.1"/>
</dbReference>
<dbReference type="SMR" id="B4U2H1"/>
<dbReference type="KEGG" id="sez:Sez_0829"/>
<dbReference type="HOGENOM" id="CLU_001114_3_1_9"/>
<dbReference type="Proteomes" id="UP000001873">
    <property type="component" value="Chromosome"/>
</dbReference>
<dbReference type="GO" id="GO:0005829">
    <property type="term" value="C:cytosol"/>
    <property type="evidence" value="ECO:0007669"/>
    <property type="project" value="TreeGrafter"/>
</dbReference>
<dbReference type="GO" id="GO:0033202">
    <property type="term" value="C:DNA helicase complex"/>
    <property type="evidence" value="ECO:0007669"/>
    <property type="project" value="TreeGrafter"/>
</dbReference>
<dbReference type="GO" id="GO:0043138">
    <property type="term" value="F:3'-5' DNA helicase activity"/>
    <property type="evidence" value="ECO:0007669"/>
    <property type="project" value="UniProtKB-UniRule"/>
</dbReference>
<dbReference type="GO" id="GO:0008408">
    <property type="term" value="F:3'-5' exonuclease activity"/>
    <property type="evidence" value="ECO:0007669"/>
    <property type="project" value="UniProtKB-UniRule"/>
</dbReference>
<dbReference type="GO" id="GO:0005524">
    <property type="term" value="F:ATP binding"/>
    <property type="evidence" value="ECO:0007669"/>
    <property type="project" value="UniProtKB-UniRule"/>
</dbReference>
<dbReference type="GO" id="GO:0016887">
    <property type="term" value="F:ATP hydrolysis activity"/>
    <property type="evidence" value="ECO:0007669"/>
    <property type="project" value="RHEA"/>
</dbReference>
<dbReference type="GO" id="GO:0003690">
    <property type="term" value="F:double-stranded DNA binding"/>
    <property type="evidence" value="ECO:0007669"/>
    <property type="project" value="UniProtKB-UniRule"/>
</dbReference>
<dbReference type="GO" id="GO:0000724">
    <property type="term" value="P:double-strand break repair via homologous recombination"/>
    <property type="evidence" value="ECO:0007669"/>
    <property type="project" value="UniProtKB-UniRule"/>
</dbReference>
<dbReference type="CDD" id="cd17932">
    <property type="entry name" value="DEXQc_UvrD"/>
    <property type="match status" value="1"/>
</dbReference>
<dbReference type="Gene3D" id="3.90.320.10">
    <property type="match status" value="1"/>
</dbReference>
<dbReference type="Gene3D" id="3.40.50.300">
    <property type="entry name" value="P-loop containing nucleotide triphosphate hydrolases"/>
    <property type="match status" value="4"/>
</dbReference>
<dbReference type="Gene3D" id="1.10.486.10">
    <property type="entry name" value="PCRA, domain 4"/>
    <property type="match status" value="1"/>
</dbReference>
<dbReference type="HAMAP" id="MF_01451">
    <property type="entry name" value="AddA"/>
    <property type="match status" value="1"/>
</dbReference>
<dbReference type="InterPro" id="IPR014152">
    <property type="entry name" value="AddA"/>
</dbReference>
<dbReference type="InterPro" id="IPR014017">
    <property type="entry name" value="DNA_helicase_UvrD-like_C"/>
</dbReference>
<dbReference type="InterPro" id="IPR000212">
    <property type="entry name" value="DNA_helicase_UvrD/REP"/>
</dbReference>
<dbReference type="InterPro" id="IPR027417">
    <property type="entry name" value="P-loop_NTPase"/>
</dbReference>
<dbReference type="InterPro" id="IPR011604">
    <property type="entry name" value="PDDEXK-like_dom_sf"/>
</dbReference>
<dbReference type="InterPro" id="IPR038726">
    <property type="entry name" value="PDDEXK_AddAB-type"/>
</dbReference>
<dbReference type="InterPro" id="IPR011335">
    <property type="entry name" value="Restrct_endonuc-II-like"/>
</dbReference>
<dbReference type="InterPro" id="IPR014016">
    <property type="entry name" value="UvrD-like_ATP-bd"/>
</dbReference>
<dbReference type="NCBIfam" id="TIGR02785">
    <property type="entry name" value="addA_Gpos"/>
    <property type="match status" value="1"/>
</dbReference>
<dbReference type="PANTHER" id="PTHR11070:SF48">
    <property type="entry name" value="ATP-DEPENDENT HELICASE_NUCLEASE SUBUNIT A"/>
    <property type="match status" value="1"/>
</dbReference>
<dbReference type="PANTHER" id="PTHR11070">
    <property type="entry name" value="UVRD / RECB / PCRA DNA HELICASE FAMILY MEMBER"/>
    <property type="match status" value="1"/>
</dbReference>
<dbReference type="Pfam" id="PF12705">
    <property type="entry name" value="PDDEXK_1"/>
    <property type="match status" value="1"/>
</dbReference>
<dbReference type="Pfam" id="PF00580">
    <property type="entry name" value="UvrD-helicase"/>
    <property type="match status" value="1"/>
</dbReference>
<dbReference type="Pfam" id="PF13361">
    <property type="entry name" value="UvrD_C"/>
    <property type="match status" value="1"/>
</dbReference>
<dbReference type="SUPFAM" id="SSF52540">
    <property type="entry name" value="P-loop containing nucleoside triphosphate hydrolases"/>
    <property type="match status" value="1"/>
</dbReference>
<dbReference type="SUPFAM" id="SSF52980">
    <property type="entry name" value="Restriction endonuclease-like"/>
    <property type="match status" value="1"/>
</dbReference>
<dbReference type="PROSITE" id="PS51198">
    <property type="entry name" value="UVRD_HELICASE_ATP_BIND"/>
    <property type="match status" value="1"/>
</dbReference>
<dbReference type="PROSITE" id="PS51217">
    <property type="entry name" value="UVRD_HELICASE_CTER"/>
    <property type="match status" value="1"/>
</dbReference>
<organism>
    <name type="scientific">Streptococcus equi subsp. zooepidemicus (strain MGCS10565)</name>
    <dbReference type="NCBI Taxonomy" id="552526"/>
    <lineage>
        <taxon>Bacteria</taxon>
        <taxon>Bacillati</taxon>
        <taxon>Bacillota</taxon>
        <taxon>Bacilli</taxon>
        <taxon>Lactobacillales</taxon>
        <taxon>Streptococcaceae</taxon>
        <taxon>Streptococcus</taxon>
    </lineage>
</organism>